<name>T2E8_ECOLX</name>
<feature type="chain" id="PRO_0000077307" description="Type II restriction enzyme Eco47II">
    <location>
        <begin position="1"/>
        <end position="239"/>
    </location>
</feature>
<organism>
    <name type="scientific">Escherichia coli</name>
    <dbReference type="NCBI Taxonomy" id="562"/>
    <lineage>
        <taxon>Bacteria</taxon>
        <taxon>Pseudomonadati</taxon>
        <taxon>Pseudomonadota</taxon>
        <taxon>Gammaproteobacteria</taxon>
        <taxon>Enterobacterales</taxon>
        <taxon>Enterobacteriaceae</taxon>
        <taxon>Escherichia</taxon>
    </lineage>
</organism>
<sequence>MSLLEYISDEDLFNEVETLLTKAKKKKDAAEKTFTSNVIDPFGALFEAPGFSSHEEWRNSELARQQQKTIQNHVGTFHQKILGHVEGWRDMGIGGIVDLLNEERRIIAEVKNKYSTVTGGDLADKYKGLDELVSPKHSRFKDYCAYFVNIIPRKPTRYNSPFTPSNKGSGTLCPSNPNIRIIDGASFYELVTGRPDALQELHSALPHAIEYILSERLGQQGFSIPDKDSFIKYFGLAYG</sequence>
<keyword id="KW-0255">Endonuclease</keyword>
<keyword id="KW-0378">Hydrolase</keyword>
<keyword id="KW-0540">Nuclease</keyword>
<keyword id="KW-0680">Restriction system</keyword>
<dbReference type="EC" id="3.1.21.4"/>
<dbReference type="EMBL" id="X82105">
    <property type="protein sequence ID" value="CAA57628.1"/>
    <property type="molecule type" value="Genomic_DNA"/>
</dbReference>
<dbReference type="REBASE" id="931">
    <property type="entry name" value="Eco47II"/>
</dbReference>
<dbReference type="PRO" id="PR:P50195"/>
<dbReference type="GO" id="GO:0003677">
    <property type="term" value="F:DNA binding"/>
    <property type="evidence" value="ECO:0007669"/>
    <property type="project" value="InterPro"/>
</dbReference>
<dbReference type="GO" id="GO:0009036">
    <property type="term" value="F:type II site-specific deoxyribonuclease activity"/>
    <property type="evidence" value="ECO:0007669"/>
    <property type="project" value="UniProtKB-EC"/>
</dbReference>
<dbReference type="GO" id="GO:0009307">
    <property type="term" value="P:DNA restriction-modification system"/>
    <property type="evidence" value="ECO:0007669"/>
    <property type="project" value="UniProtKB-KW"/>
</dbReference>
<dbReference type="InterPro" id="IPR019057">
    <property type="entry name" value="Restrct_endonuc_II_Eco47II"/>
</dbReference>
<dbReference type="Pfam" id="PF09553">
    <property type="entry name" value="RE_Eco47II"/>
    <property type="match status" value="1"/>
</dbReference>
<comment type="function">
    <text evidence="1 3">A P subtype restriction enzyme that recognizes the double-stranded sequence 5'-GGNCC-3'; the cleavage site is unknown.</text>
</comment>
<comment type="catalytic activity">
    <reaction>
        <text>Endonucleolytic cleavage of DNA to give specific double-stranded fragments with terminal 5'-phosphates.</text>
        <dbReference type="EC" id="3.1.21.4"/>
    </reaction>
</comment>
<accession>P50195</accession>
<proteinExistence type="predicted"/>
<reference key="1">
    <citation type="journal article" date="1995" name="Gene">
        <title>Cloning and characterization of the unusual restriction-modification system comprising two restriction endonucleases and one methyltransferase.</title>
        <authorList>
            <person name="Stankevicius K."/>
            <person name="Povilionis P."/>
            <person name="Lubys A."/>
            <person name="Menkevicius S."/>
            <person name="Janulaitis A."/>
        </authorList>
    </citation>
    <scope>NUCLEOTIDE SEQUENCE [GENOMIC DNA]</scope>
    <scope>FUNCTION</scope>
    <source>
        <strain>RFL47</strain>
    </source>
</reference>
<reference key="2">
    <citation type="journal article" date="2003" name="Nucleic Acids Res.">
        <title>A nomenclature for restriction enzymes, DNA methyltransferases, homing endonucleases and their genes.</title>
        <authorList>
            <person name="Roberts R.J."/>
            <person name="Belfort M."/>
            <person name="Bestor T."/>
            <person name="Bhagwat A.S."/>
            <person name="Bickle T.A."/>
            <person name="Bitinaite J."/>
            <person name="Blumenthal R.M."/>
            <person name="Degtyarev S.K."/>
            <person name="Dryden D.T."/>
            <person name="Dybvig K."/>
            <person name="Firman K."/>
            <person name="Gromova E.S."/>
            <person name="Gumport R.I."/>
            <person name="Halford S.E."/>
            <person name="Hattman S."/>
            <person name="Heitman J."/>
            <person name="Hornby D.P."/>
            <person name="Janulaitis A."/>
            <person name="Jeltsch A."/>
            <person name="Josephsen J."/>
            <person name="Kiss A."/>
            <person name="Klaenhammer T.R."/>
            <person name="Kobayashi I."/>
            <person name="Kong H."/>
            <person name="Krueger D.H."/>
            <person name="Lacks S."/>
            <person name="Marinus M.G."/>
            <person name="Miyahara M."/>
            <person name="Morgan R.D."/>
            <person name="Murray N.E."/>
            <person name="Nagaraja V."/>
            <person name="Piekarowicz A."/>
            <person name="Pingoud A."/>
            <person name="Raleigh E."/>
            <person name="Rao D.N."/>
            <person name="Reich N."/>
            <person name="Repin V.E."/>
            <person name="Selker E.U."/>
            <person name="Shaw P.C."/>
            <person name="Stein D.C."/>
            <person name="Stoddard B.L."/>
            <person name="Szybalski W."/>
            <person name="Trautner T.A."/>
            <person name="Van Etten J.L."/>
            <person name="Vitor J.M."/>
            <person name="Wilson G.G."/>
            <person name="Xu S.Y."/>
        </authorList>
    </citation>
    <scope>NOMENCLATURE</scope>
    <scope>SUBTYPE</scope>
</reference>
<evidence type="ECO:0000303" key="1">
    <source>
    </source>
</evidence>
<evidence type="ECO:0000303" key="2">
    <source>
    </source>
</evidence>
<evidence type="ECO:0000305" key="3">
    <source>
    </source>
</evidence>
<gene>
    <name evidence="2" type="primary">eco47IIR</name>
</gene>
<protein>
    <recommendedName>
        <fullName evidence="1">Type II restriction enzyme Eco47II</fullName>
        <shortName evidence="2">R.Eco47II</shortName>
        <ecNumber>3.1.21.4</ecNumber>
    </recommendedName>
    <alternativeName>
        <fullName>Endonuclease Eco47II</fullName>
    </alternativeName>
    <alternativeName>
        <fullName>Type-2 restriction enzyme Eco47II</fullName>
    </alternativeName>
</protein>